<name>PYRH_COXBU</name>
<dbReference type="EC" id="2.7.4.22" evidence="1"/>
<dbReference type="EMBL" id="AE016828">
    <property type="protein sequence ID" value="AAO90887.1"/>
    <property type="molecule type" value="Genomic_DNA"/>
</dbReference>
<dbReference type="RefSeq" id="NP_820373.1">
    <property type="nucleotide sequence ID" value="NC_002971.4"/>
</dbReference>
<dbReference type="RefSeq" id="WP_010958192.1">
    <property type="nucleotide sequence ID" value="NZ_CCYB01000027.1"/>
</dbReference>
<dbReference type="SMR" id="Q83BV3"/>
<dbReference type="STRING" id="227377.CBU_1384"/>
<dbReference type="DNASU" id="1209290"/>
<dbReference type="EnsemblBacteria" id="AAO90887">
    <property type="protein sequence ID" value="AAO90887"/>
    <property type="gene ID" value="CBU_1384"/>
</dbReference>
<dbReference type="GeneID" id="1209290"/>
<dbReference type="KEGG" id="cbu:CBU_1384"/>
<dbReference type="PATRIC" id="fig|227377.7.peg.1380"/>
<dbReference type="eggNOG" id="COG0528">
    <property type="taxonomic scope" value="Bacteria"/>
</dbReference>
<dbReference type="HOGENOM" id="CLU_033861_0_0_6"/>
<dbReference type="OrthoDB" id="9807458at2"/>
<dbReference type="UniPathway" id="UPA00159">
    <property type="reaction ID" value="UER00275"/>
</dbReference>
<dbReference type="Proteomes" id="UP000002671">
    <property type="component" value="Chromosome"/>
</dbReference>
<dbReference type="GO" id="GO:0005829">
    <property type="term" value="C:cytosol"/>
    <property type="evidence" value="ECO:0000318"/>
    <property type="project" value="GO_Central"/>
</dbReference>
<dbReference type="GO" id="GO:0005524">
    <property type="term" value="F:ATP binding"/>
    <property type="evidence" value="ECO:0007669"/>
    <property type="project" value="UniProtKB-KW"/>
</dbReference>
<dbReference type="GO" id="GO:0033862">
    <property type="term" value="F:UMP kinase activity"/>
    <property type="evidence" value="ECO:0000318"/>
    <property type="project" value="GO_Central"/>
</dbReference>
<dbReference type="GO" id="GO:0044210">
    <property type="term" value="P:'de novo' CTP biosynthetic process"/>
    <property type="evidence" value="ECO:0007669"/>
    <property type="project" value="UniProtKB-UniRule"/>
</dbReference>
<dbReference type="GO" id="GO:0006225">
    <property type="term" value="P:UDP biosynthetic process"/>
    <property type="evidence" value="ECO:0000318"/>
    <property type="project" value="GO_Central"/>
</dbReference>
<dbReference type="CDD" id="cd04254">
    <property type="entry name" value="AAK_UMPK-PyrH-Ec"/>
    <property type="match status" value="1"/>
</dbReference>
<dbReference type="FunFam" id="3.40.1160.10:FF:000001">
    <property type="entry name" value="Uridylate kinase"/>
    <property type="match status" value="1"/>
</dbReference>
<dbReference type="Gene3D" id="3.40.1160.10">
    <property type="entry name" value="Acetylglutamate kinase-like"/>
    <property type="match status" value="1"/>
</dbReference>
<dbReference type="HAMAP" id="MF_01220_B">
    <property type="entry name" value="PyrH_B"/>
    <property type="match status" value="1"/>
</dbReference>
<dbReference type="InterPro" id="IPR036393">
    <property type="entry name" value="AceGlu_kinase-like_sf"/>
</dbReference>
<dbReference type="InterPro" id="IPR001048">
    <property type="entry name" value="Asp/Glu/Uridylate_kinase"/>
</dbReference>
<dbReference type="InterPro" id="IPR011817">
    <property type="entry name" value="Uridylate_kinase"/>
</dbReference>
<dbReference type="InterPro" id="IPR015963">
    <property type="entry name" value="Uridylate_kinase_bac"/>
</dbReference>
<dbReference type="NCBIfam" id="TIGR02075">
    <property type="entry name" value="pyrH_bact"/>
    <property type="match status" value="1"/>
</dbReference>
<dbReference type="PANTHER" id="PTHR42833">
    <property type="entry name" value="URIDYLATE KINASE"/>
    <property type="match status" value="1"/>
</dbReference>
<dbReference type="PANTHER" id="PTHR42833:SF4">
    <property type="entry name" value="URIDYLATE KINASE PUMPKIN, CHLOROPLASTIC"/>
    <property type="match status" value="1"/>
</dbReference>
<dbReference type="Pfam" id="PF00696">
    <property type="entry name" value="AA_kinase"/>
    <property type="match status" value="1"/>
</dbReference>
<dbReference type="PIRSF" id="PIRSF005650">
    <property type="entry name" value="Uridylate_kin"/>
    <property type="match status" value="1"/>
</dbReference>
<dbReference type="SUPFAM" id="SSF53633">
    <property type="entry name" value="Carbamate kinase-like"/>
    <property type="match status" value="1"/>
</dbReference>
<reference key="1">
    <citation type="journal article" date="2003" name="Proc. Natl. Acad. Sci. U.S.A.">
        <title>Complete genome sequence of the Q-fever pathogen, Coxiella burnetii.</title>
        <authorList>
            <person name="Seshadri R."/>
            <person name="Paulsen I.T."/>
            <person name="Eisen J.A."/>
            <person name="Read T.D."/>
            <person name="Nelson K.E."/>
            <person name="Nelson W.C."/>
            <person name="Ward N.L."/>
            <person name="Tettelin H."/>
            <person name="Davidsen T.M."/>
            <person name="Beanan M.J."/>
            <person name="DeBoy R.T."/>
            <person name="Daugherty S.C."/>
            <person name="Brinkac L.M."/>
            <person name="Madupu R."/>
            <person name="Dodson R.J."/>
            <person name="Khouri H.M."/>
            <person name="Lee K.H."/>
            <person name="Carty H.A."/>
            <person name="Scanlan D."/>
            <person name="Heinzen R.A."/>
            <person name="Thompson H.A."/>
            <person name="Samuel J.E."/>
            <person name="Fraser C.M."/>
            <person name="Heidelberg J.F."/>
        </authorList>
    </citation>
    <scope>NUCLEOTIDE SEQUENCE [LARGE SCALE GENOMIC DNA]</scope>
    <source>
        <strain>RSA 493 / Nine Mile phase I</strain>
    </source>
</reference>
<proteinExistence type="inferred from homology"/>
<evidence type="ECO:0000255" key="1">
    <source>
        <dbReference type="HAMAP-Rule" id="MF_01220"/>
    </source>
</evidence>
<accession>Q83BV3</accession>
<keyword id="KW-0067">ATP-binding</keyword>
<keyword id="KW-0963">Cytoplasm</keyword>
<keyword id="KW-0418">Kinase</keyword>
<keyword id="KW-0547">Nucleotide-binding</keyword>
<keyword id="KW-0665">Pyrimidine biosynthesis</keyword>
<keyword id="KW-1185">Reference proteome</keyword>
<keyword id="KW-0808">Transferase</keyword>
<feature type="chain" id="PRO_0000323830" description="Uridylate kinase">
    <location>
        <begin position="1"/>
        <end position="243"/>
    </location>
</feature>
<feature type="binding site" evidence="1">
    <location>
        <begin position="15"/>
        <end position="18"/>
    </location>
    <ligand>
        <name>ATP</name>
        <dbReference type="ChEBI" id="CHEBI:30616"/>
    </ligand>
</feature>
<feature type="binding site" evidence="1">
    <location>
        <position position="57"/>
    </location>
    <ligand>
        <name>UMP</name>
        <dbReference type="ChEBI" id="CHEBI:57865"/>
    </ligand>
</feature>
<feature type="binding site" evidence="1">
    <location>
        <position position="58"/>
    </location>
    <ligand>
        <name>ATP</name>
        <dbReference type="ChEBI" id="CHEBI:30616"/>
    </ligand>
</feature>
<feature type="binding site" evidence="1">
    <location>
        <position position="62"/>
    </location>
    <ligand>
        <name>ATP</name>
        <dbReference type="ChEBI" id="CHEBI:30616"/>
    </ligand>
</feature>
<feature type="binding site" evidence="1">
    <location>
        <position position="77"/>
    </location>
    <ligand>
        <name>UMP</name>
        <dbReference type="ChEBI" id="CHEBI:57865"/>
    </ligand>
</feature>
<feature type="binding site" evidence="1">
    <location>
        <begin position="138"/>
        <end position="145"/>
    </location>
    <ligand>
        <name>UMP</name>
        <dbReference type="ChEBI" id="CHEBI:57865"/>
    </ligand>
</feature>
<feature type="binding site" evidence="1">
    <location>
        <position position="165"/>
    </location>
    <ligand>
        <name>ATP</name>
        <dbReference type="ChEBI" id="CHEBI:30616"/>
    </ligand>
</feature>
<feature type="binding site" evidence="1">
    <location>
        <position position="166"/>
    </location>
    <ligand>
        <name>ATP</name>
        <dbReference type="ChEBI" id="CHEBI:30616"/>
    </ligand>
</feature>
<feature type="binding site" evidence="1">
    <location>
        <position position="171"/>
    </location>
    <ligand>
        <name>ATP</name>
        <dbReference type="ChEBI" id="CHEBI:30616"/>
    </ligand>
</feature>
<feature type="binding site" evidence="1">
    <location>
        <position position="174"/>
    </location>
    <ligand>
        <name>ATP</name>
        <dbReference type="ChEBI" id="CHEBI:30616"/>
    </ligand>
</feature>
<sequence length="243" mass="26362">MTNGPQPLYRRVLLKMSGEALMGKGLHAIDPNVLDRMAKDVTQVYQLGVQIAIVIGGGNFFRGAALQAAGINRITGDYMGMLATLMNALALRDAFERSNLPVRILSAIPMTGVADAFHRRKAIHHLQQGRVVIFAAGTGNPLVTTDSAASLRGIEINADVVLKATNVDGVYSDDPAKNPQAKLYKHLSYQEALKKELAVMDLAAFCQCRDYNMPLRVFNINKPGALLSVIMNQEEGTLVDQGQ</sequence>
<gene>
    <name evidence="1" type="primary">pyrH</name>
    <name type="ordered locus">CBU_1384</name>
</gene>
<comment type="function">
    <text evidence="1">Catalyzes the reversible phosphorylation of UMP to UDP.</text>
</comment>
<comment type="catalytic activity">
    <reaction evidence="1">
        <text>UMP + ATP = UDP + ADP</text>
        <dbReference type="Rhea" id="RHEA:24400"/>
        <dbReference type="ChEBI" id="CHEBI:30616"/>
        <dbReference type="ChEBI" id="CHEBI:57865"/>
        <dbReference type="ChEBI" id="CHEBI:58223"/>
        <dbReference type="ChEBI" id="CHEBI:456216"/>
        <dbReference type="EC" id="2.7.4.22"/>
    </reaction>
</comment>
<comment type="activity regulation">
    <text evidence="1">Inhibited by UTP.</text>
</comment>
<comment type="pathway">
    <text evidence="1">Pyrimidine metabolism; CTP biosynthesis via de novo pathway; UDP from UMP (UMPK route): step 1/1.</text>
</comment>
<comment type="subunit">
    <text evidence="1">Homohexamer.</text>
</comment>
<comment type="subcellular location">
    <subcellularLocation>
        <location evidence="1">Cytoplasm</location>
    </subcellularLocation>
</comment>
<comment type="similarity">
    <text evidence="1">Belongs to the UMP kinase family.</text>
</comment>
<protein>
    <recommendedName>
        <fullName evidence="1">Uridylate kinase</fullName>
        <shortName evidence="1">UK</shortName>
        <ecNumber evidence="1">2.7.4.22</ecNumber>
    </recommendedName>
    <alternativeName>
        <fullName evidence="1">Uridine monophosphate kinase</fullName>
        <shortName evidence="1">UMP kinase</shortName>
        <shortName evidence="1">UMPK</shortName>
    </alternativeName>
</protein>
<organism>
    <name type="scientific">Coxiella burnetii (strain RSA 493 / Nine Mile phase I)</name>
    <dbReference type="NCBI Taxonomy" id="227377"/>
    <lineage>
        <taxon>Bacteria</taxon>
        <taxon>Pseudomonadati</taxon>
        <taxon>Pseudomonadota</taxon>
        <taxon>Gammaproteobacteria</taxon>
        <taxon>Legionellales</taxon>
        <taxon>Coxiellaceae</taxon>
        <taxon>Coxiella</taxon>
    </lineage>
</organism>